<name>RL1_XANCP</name>
<comment type="function">
    <text evidence="1">Binds directly to 23S rRNA. The L1 stalk is quite mobile in the ribosome, and is involved in E site tRNA release.</text>
</comment>
<comment type="function">
    <text evidence="1">Protein L1 is also a translational repressor protein, it controls the translation of the L11 operon by binding to its mRNA.</text>
</comment>
<comment type="subunit">
    <text evidence="1">Part of the 50S ribosomal subunit.</text>
</comment>
<comment type="similarity">
    <text evidence="1">Belongs to the universal ribosomal protein uL1 family.</text>
</comment>
<gene>
    <name evidence="1" type="primary">rplA</name>
    <name type="ordered locus">XCC0885</name>
</gene>
<organism>
    <name type="scientific">Xanthomonas campestris pv. campestris (strain ATCC 33913 / DSM 3586 / NCPPB 528 / LMG 568 / P 25)</name>
    <dbReference type="NCBI Taxonomy" id="190485"/>
    <lineage>
        <taxon>Bacteria</taxon>
        <taxon>Pseudomonadati</taxon>
        <taxon>Pseudomonadota</taxon>
        <taxon>Gammaproteobacteria</taxon>
        <taxon>Lysobacterales</taxon>
        <taxon>Lysobacteraceae</taxon>
        <taxon>Xanthomonas</taxon>
    </lineage>
</organism>
<accession>Q8RTJ4</accession>
<dbReference type="EMBL" id="AF426391">
    <property type="protein sequence ID" value="AAL74157.1"/>
    <property type="molecule type" value="Genomic_DNA"/>
</dbReference>
<dbReference type="EMBL" id="AE008922">
    <property type="protein sequence ID" value="AAM40195.1"/>
    <property type="molecule type" value="Genomic_DNA"/>
</dbReference>
<dbReference type="RefSeq" id="NP_636271.1">
    <property type="nucleotide sequence ID" value="NC_003902.1"/>
</dbReference>
<dbReference type="RefSeq" id="WP_011036115.1">
    <property type="nucleotide sequence ID" value="NC_003902.1"/>
</dbReference>
<dbReference type="SMR" id="Q8RTJ4"/>
<dbReference type="STRING" id="190485.XCC0885"/>
<dbReference type="EnsemblBacteria" id="AAM40195">
    <property type="protein sequence ID" value="AAM40195"/>
    <property type="gene ID" value="XCC0885"/>
</dbReference>
<dbReference type="GeneID" id="58014539"/>
<dbReference type="KEGG" id="xcc:XCC0885"/>
<dbReference type="PATRIC" id="fig|190485.4.peg.956"/>
<dbReference type="eggNOG" id="COG0081">
    <property type="taxonomic scope" value="Bacteria"/>
</dbReference>
<dbReference type="HOGENOM" id="CLU_062853_0_0_6"/>
<dbReference type="OrthoDB" id="9803740at2"/>
<dbReference type="Proteomes" id="UP000001010">
    <property type="component" value="Chromosome"/>
</dbReference>
<dbReference type="GO" id="GO:0022625">
    <property type="term" value="C:cytosolic large ribosomal subunit"/>
    <property type="evidence" value="ECO:0000318"/>
    <property type="project" value="GO_Central"/>
</dbReference>
<dbReference type="GO" id="GO:0019843">
    <property type="term" value="F:rRNA binding"/>
    <property type="evidence" value="ECO:0007669"/>
    <property type="project" value="UniProtKB-UniRule"/>
</dbReference>
<dbReference type="GO" id="GO:0003735">
    <property type="term" value="F:structural constituent of ribosome"/>
    <property type="evidence" value="ECO:0007669"/>
    <property type="project" value="InterPro"/>
</dbReference>
<dbReference type="GO" id="GO:0000049">
    <property type="term" value="F:tRNA binding"/>
    <property type="evidence" value="ECO:0007669"/>
    <property type="project" value="UniProtKB-KW"/>
</dbReference>
<dbReference type="GO" id="GO:0006417">
    <property type="term" value="P:regulation of translation"/>
    <property type="evidence" value="ECO:0007669"/>
    <property type="project" value="UniProtKB-KW"/>
</dbReference>
<dbReference type="GO" id="GO:0006412">
    <property type="term" value="P:translation"/>
    <property type="evidence" value="ECO:0007669"/>
    <property type="project" value="UniProtKB-UniRule"/>
</dbReference>
<dbReference type="CDD" id="cd00403">
    <property type="entry name" value="Ribosomal_L1"/>
    <property type="match status" value="1"/>
</dbReference>
<dbReference type="FunFam" id="3.40.50.790:FF:000001">
    <property type="entry name" value="50S ribosomal protein L1"/>
    <property type="match status" value="1"/>
</dbReference>
<dbReference type="Gene3D" id="3.30.190.20">
    <property type="match status" value="1"/>
</dbReference>
<dbReference type="Gene3D" id="3.40.50.790">
    <property type="match status" value="1"/>
</dbReference>
<dbReference type="HAMAP" id="MF_01318_B">
    <property type="entry name" value="Ribosomal_uL1_B"/>
    <property type="match status" value="1"/>
</dbReference>
<dbReference type="InterPro" id="IPR005878">
    <property type="entry name" value="Ribosom_uL1_bac-type"/>
</dbReference>
<dbReference type="InterPro" id="IPR002143">
    <property type="entry name" value="Ribosomal_uL1"/>
</dbReference>
<dbReference type="InterPro" id="IPR023674">
    <property type="entry name" value="Ribosomal_uL1-like"/>
</dbReference>
<dbReference type="InterPro" id="IPR028364">
    <property type="entry name" value="Ribosomal_uL1/biogenesis"/>
</dbReference>
<dbReference type="InterPro" id="IPR016095">
    <property type="entry name" value="Ribosomal_uL1_3-a/b-sand"/>
</dbReference>
<dbReference type="InterPro" id="IPR023673">
    <property type="entry name" value="Ribosomal_uL1_CS"/>
</dbReference>
<dbReference type="NCBIfam" id="TIGR01169">
    <property type="entry name" value="rplA_bact"/>
    <property type="match status" value="1"/>
</dbReference>
<dbReference type="PANTHER" id="PTHR36427">
    <property type="entry name" value="54S RIBOSOMAL PROTEIN L1, MITOCHONDRIAL"/>
    <property type="match status" value="1"/>
</dbReference>
<dbReference type="PANTHER" id="PTHR36427:SF3">
    <property type="entry name" value="LARGE RIBOSOMAL SUBUNIT PROTEIN UL1M"/>
    <property type="match status" value="1"/>
</dbReference>
<dbReference type="Pfam" id="PF00687">
    <property type="entry name" value="Ribosomal_L1"/>
    <property type="match status" value="1"/>
</dbReference>
<dbReference type="PIRSF" id="PIRSF002155">
    <property type="entry name" value="Ribosomal_L1"/>
    <property type="match status" value="1"/>
</dbReference>
<dbReference type="SUPFAM" id="SSF56808">
    <property type="entry name" value="Ribosomal protein L1"/>
    <property type="match status" value="1"/>
</dbReference>
<dbReference type="PROSITE" id="PS01199">
    <property type="entry name" value="RIBOSOMAL_L1"/>
    <property type="match status" value="1"/>
</dbReference>
<keyword id="KW-1185">Reference proteome</keyword>
<keyword id="KW-0678">Repressor</keyword>
<keyword id="KW-0687">Ribonucleoprotein</keyword>
<keyword id="KW-0689">Ribosomal protein</keyword>
<keyword id="KW-0694">RNA-binding</keyword>
<keyword id="KW-0699">rRNA-binding</keyword>
<keyword id="KW-0810">Translation regulation</keyword>
<keyword id="KW-0820">tRNA-binding</keyword>
<feature type="chain" id="PRO_0000125779" description="Large ribosomal subunit protein uL1">
    <location>
        <begin position="1"/>
        <end position="232"/>
    </location>
</feature>
<sequence length="232" mass="23979">MAQSKRVKAIAAAVVPGKTYAFEDAIKILKTSTKAKFVESIDVAVRLGVDAKKSDQQVRGSTVLPAGTGKSVRVAVFAPAGAKADEALAAGAEAVGMDDLAEKMQAGDLNYDVVIATPDAMRVVGKLGTLLGPRGLMPNPKVGTVSPNPGEAVKNAKSGQVRYRTDKAGIIHCTIGKASFDDEALKSNLQALLLDLVKAKPATSKGTYLQKVSVSSTMGPGVTVDQSSLSLK</sequence>
<reference key="1">
    <citation type="submission" date="2001-10" db="EMBL/GenBank/DDBJ databases">
        <authorList>
            <person name="Chen S.-J."/>
            <person name="Chiang Y.-L."/>
            <person name="Yu Y.-J."/>
            <person name="Yang M.-T."/>
        </authorList>
    </citation>
    <scope>NUCLEOTIDE SEQUENCE [GENOMIC DNA]</scope>
</reference>
<reference key="2">
    <citation type="journal article" date="2002" name="Nature">
        <title>Comparison of the genomes of two Xanthomonas pathogens with differing host specificities.</title>
        <authorList>
            <person name="da Silva A.C.R."/>
            <person name="Ferro J.A."/>
            <person name="Reinach F.C."/>
            <person name="Farah C.S."/>
            <person name="Furlan L.R."/>
            <person name="Quaggio R.B."/>
            <person name="Monteiro-Vitorello C.B."/>
            <person name="Van Sluys M.A."/>
            <person name="Almeida N.F. Jr."/>
            <person name="Alves L.M.C."/>
            <person name="do Amaral A.M."/>
            <person name="Bertolini M.C."/>
            <person name="Camargo L.E.A."/>
            <person name="Camarotte G."/>
            <person name="Cannavan F."/>
            <person name="Cardozo J."/>
            <person name="Chambergo F."/>
            <person name="Ciapina L.P."/>
            <person name="Cicarelli R.M.B."/>
            <person name="Coutinho L.L."/>
            <person name="Cursino-Santos J.R."/>
            <person name="El-Dorry H."/>
            <person name="Faria J.B."/>
            <person name="Ferreira A.J.S."/>
            <person name="Ferreira R.C.C."/>
            <person name="Ferro M.I.T."/>
            <person name="Formighieri E.F."/>
            <person name="Franco M.C."/>
            <person name="Greggio C.C."/>
            <person name="Gruber A."/>
            <person name="Katsuyama A.M."/>
            <person name="Kishi L.T."/>
            <person name="Leite R.P."/>
            <person name="Lemos E.G.M."/>
            <person name="Lemos M.V.F."/>
            <person name="Locali E.C."/>
            <person name="Machado M.A."/>
            <person name="Madeira A.M.B.N."/>
            <person name="Martinez-Rossi N.M."/>
            <person name="Martins E.C."/>
            <person name="Meidanis J."/>
            <person name="Menck C.F.M."/>
            <person name="Miyaki C.Y."/>
            <person name="Moon D.H."/>
            <person name="Moreira L.M."/>
            <person name="Novo M.T.M."/>
            <person name="Okura V.K."/>
            <person name="Oliveira M.C."/>
            <person name="Oliveira V.R."/>
            <person name="Pereira H.A."/>
            <person name="Rossi A."/>
            <person name="Sena J.A.D."/>
            <person name="Silva C."/>
            <person name="de Souza R.F."/>
            <person name="Spinola L.A.F."/>
            <person name="Takita M.A."/>
            <person name="Tamura R.E."/>
            <person name="Teixeira E.C."/>
            <person name="Tezza R.I.D."/>
            <person name="Trindade dos Santos M."/>
            <person name="Truffi D."/>
            <person name="Tsai S.M."/>
            <person name="White F.F."/>
            <person name="Setubal J.C."/>
            <person name="Kitajima J.P."/>
        </authorList>
    </citation>
    <scope>NUCLEOTIDE SEQUENCE [LARGE SCALE GENOMIC DNA]</scope>
    <source>
        <strain>ATCC 33913 / DSM 3586 / NCPPB 528 / LMG 568 / P 25</strain>
    </source>
</reference>
<evidence type="ECO:0000255" key="1">
    <source>
        <dbReference type="HAMAP-Rule" id="MF_01318"/>
    </source>
</evidence>
<evidence type="ECO:0000305" key="2"/>
<proteinExistence type="inferred from homology"/>
<protein>
    <recommendedName>
        <fullName evidence="1">Large ribosomal subunit protein uL1</fullName>
    </recommendedName>
    <alternativeName>
        <fullName evidence="2">50S ribosomal protein L1</fullName>
    </alternativeName>
</protein>